<feature type="chain" id="PRO_0000234229" description="Urease subunit beta">
    <location>
        <begin position="1"/>
        <end position="102"/>
    </location>
</feature>
<protein>
    <recommendedName>
        <fullName evidence="1">Urease subunit beta</fullName>
        <ecNumber evidence="1">3.5.1.5</ecNumber>
    </recommendedName>
    <alternativeName>
        <fullName evidence="1">Urea amidohydrolase subunit beta</fullName>
    </alternativeName>
</protein>
<organism>
    <name type="scientific">Blochmanniella pennsylvanica (strain BPEN)</name>
    <dbReference type="NCBI Taxonomy" id="291272"/>
    <lineage>
        <taxon>Bacteria</taxon>
        <taxon>Pseudomonadati</taxon>
        <taxon>Pseudomonadota</taxon>
        <taxon>Gammaproteobacteria</taxon>
        <taxon>Enterobacterales</taxon>
        <taxon>Enterobacteriaceae</taxon>
        <taxon>ant endosymbionts</taxon>
        <taxon>Candidatus Blochmanniella</taxon>
    </lineage>
</organism>
<accession>Q492E8</accession>
<dbReference type="EC" id="3.5.1.5" evidence="1"/>
<dbReference type="EMBL" id="CP000016">
    <property type="protein sequence ID" value="AAZ41153.1"/>
    <property type="molecule type" value="Genomic_DNA"/>
</dbReference>
<dbReference type="RefSeq" id="WP_011283064.1">
    <property type="nucleotide sequence ID" value="NC_007292.1"/>
</dbReference>
<dbReference type="SMR" id="Q492E8"/>
<dbReference type="STRING" id="291272.BPEN_543"/>
<dbReference type="KEGG" id="bpn:BPEN_543"/>
<dbReference type="eggNOG" id="COG0832">
    <property type="taxonomic scope" value="Bacteria"/>
</dbReference>
<dbReference type="HOGENOM" id="CLU_129707_1_1_6"/>
<dbReference type="OrthoDB" id="9797217at2"/>
<dbReference type="UniPathway" id="UPA00258">
    <property type="reaction ID" value="UER00370"/>
</dbReference>
<dbReference type="Proteomes" id="UP000007794">
    <property type="component" value="Chromosome"/>
</dbReference>
<dbReference type="GO" id="GO:0035550">
    <property type="term" value="C:urease complex"/>
    <property type="evidence" value="ECO:0007669"/>
    <property type="project" value="InterPro"/>
</dbReference>
<dbReference type="GO" id="GO:0009039">
    <property type="term" value="F:urease activity"/>
    <property type="evidence" value="ECO:0007669"/>
    <property type="project" value="UniProtKB-UniRule"/>
</dbReference>
<dbReference type="GO" id="GO:0043419">
    <property type="term" value="P:urea catabolic process"/>
    <property type="evidence" value="ECO:0007669"/>
    <property type="project" value="UniProtKB-UniRule"/>
</dbReference>
<dbReference type="CDD" id="cd00407">
    <property type="entry name" value="Urease_beta"/>
    <property type="match status" value="1"/>
</dbReference>
<dbReference type="Gene3D" id="2.10.150.10">
    <property type="entry name" value="Urease, beta subunit"/>
    <property type="match status" value="1"/>
</dbReference>
<dbReference type="HAMAP" id="MF_01954">
    <property type="entry name" value="Urease_beta"/>
    <property type="match status" value="1"/>
</dbReference>
<dbReference type="InterPro" id="IPR002019">
    <property type="entry name" value="Urease_beta-like"/>
</dbReference>
<dbReference type="InterPro" id="IPR036461">
    <property type="entry name" value="Urease_betasu_sf"/>
</dbReference>
<dbReference type="InterPro" id="IPR050069">
    <property type="entry name" value="Urease_subunit"/>
</dbReference>
<dbReference type="NCBIfam" id="NF009682">
    <property type="entry name" value="PRK13203.1"/>
    <property type="match status" value="1"/>
</dbReference>
<dbReference type="NCBIfam" id="TIGR00192">
    <property type="entry name" value="urease_beta"/>
    <property type="match status" value="1"/>
</dbReference>
<dbReference type="PANTHER" id="PTHR33569">
    <property type="entry name" value="UREASE"/>
    <property type="match status" value="1"/>
</dbReference>
<dbReference type="PANTHER" id="PTHR33569:SF1">
    <property type="entry name" value="UREASE"/>
    <property type="match status" value="1"/>
</dbReference>
<dbReference type="Pfam" id="PF00699">
    <property type="entry name" value="Urease_beta"/>
    <property type="match status" value="1"/>
</dbReference>
<dbReference type="SUPFAM" id="SSF51278">
    <property type="entry name" value="Urease, beta-subunit"/>
    <property type="match status" value="1"/>
</dbReference>
<gene>
    <name evidence="1" type="primary">ureB</name>
    <name type="ordered locus">BPEN_543</name>
</gene>
<reference key="1">
    <citation type="journal article" date="2005" name="Genome Res.">
        <title>Genome sequence of Blochmannia pennsylvanicus indicates parallel evolutionary trends among bacterial mutualists of insects.</title>
        <authorList>
            <person name="Degnan P.H."/>
            <person name="Lazarus A.B."/>
            <person name="Wernegreen J.J."/>
        </authorList>
    </citation>
    <scope>NUCLEOTIDE SEQUENCE [LARGE SCALE GENOMIC DNA]</scope>
    <source>
        <strain>BPEN</strain>
    </source>
</reference>
<keyword id="KW-0963">Cytoplasm</keyword>
<keyword id="KW-0378">Hydrolase</keyword>
<keyword id="KW-1185">Reference proteome</keyword>
<proteinExistence type="inferred from homology"/>
<name>URE2_BLOPB</name>
<sequence length="102" mass="11491">MIPGEFYISHGNIELNVGRQQVLVTIINTGDRPIQIGSHFHFYEVNSALKFNRVITRGFRLNIPSGTAIRFEPGQFRTVELVKYAGACKIYGFCKAIMGKLD</sequence>
<comment type="catalytic activity">
    <reaction evidence="1">
        <text>urea + 2 H2O + H(+) = hydrogencarbonate + 2 NH4(+)</text>
        <dbReference type="Rhea" id="RHEA:20557"/>
        <dbReference type="ChEBI" id="CHEBI:15377"/>
        <dbReference type="ChEBI" id="CHEBI:15378"/>
        <dbReference type="ChEBI" id="CHEBI:16199"/>
        <dbReference type="ChEBI" id="CHEBI:17544"/>
        <dbReference type="ChEBI" id="CHEBI:28938"/>
        <dbReference type="EC" id="3.5.1.5"/>
    </reaction>
</comment>
<comment type="pathway">
    <text evidence="1">Nitrogen metabolism; urea degradation; CO(2) and NH(3) from urea (urease route): step 1/1.</text>
</comment>
<comment type="subunit">
    <text evidence="1">Heterotrimer of UreA (gamma), UreB (beta) and UreC (alpha) subunits. Three heterotrimers associate to form the active enzyme.</text>
</comment>
<comment type="subcellular location">
    <subcellularLocation>
        <location evidence="1">Cytoplasm</location>
    </subcellularLocation>
</comment>
<comment type="similarity">
    <text evidence="1">Belongs to the urease beta subunit family.</text>
</comment>
<evidence type="ECO:0000255" key="1">
    <source>
        <dbReference type="HAMAP-Rule" id="MF_01954"/>
    </source>
</evidence>